<protein>
    <recommendedName>
        <fullName>Max dimerization protein 3</fullName>
        <shortName>Max dimerizer 3</shortName>
    </recommendedName>
    <alternativeName>
        <fullName>Max-associated protein 3</fullName>
    </alternativeName>
</protein>
<accession>Q80US8</accession>
<accession>Q60947</accession>
<organism>
    <name type="scientific">Mus musculus</name>
    <name type="common">Mouse</name>
    <dbReference type="NCBI Taxonomy" id="10090"/>
    <lineage>
        <taxon>Eukaryota</taxon>
        <taxon>Metazoa</taxon>
        <taxon>Chordata</taxon>
        <taxon>Craniata</taxon>
        <taxon>Vertebrata</taxon>
        <taxon>Euteleostomi</taxon>
        <taxon>Mammalia</taxon>
        <taxon>Eutheria</taxon>
        <taxon>Euarchontoglires</taxon>
        <taxon>Glires</taxon>
        <taxon>Rodentia</taxon>
        <taxon>Myomorpha</taxon>
        <taxon>Muroidea</taxon>
        <taxon>Muridae</taxon>
        <taxon>Murinae</taxon>
        <taxon>Mus</taxon>
        <taxon>Mus</taxon>
    </lineage>
</organism>
<evidence type="ECO:0000255" key="1">
    <source>
        <dbReference type="PROSITE-ProRule" id="PRU00981"/>
    </source>
</evidence>
<evidence type="ECO:0000256" key="2">
    <source>
        <dbReference type="SAM" id="MobiDB-lite"/>
    </source>
</evidence>
<evidence type="ECO:0000269" key="3">
    <source>
    </source>
</evidence>
<evidence type="ECO:0000269" key="4">
    <source>
    </source>
</evidence>
<evidence type="ECO:0000269" key="5">
    <source>
    </source>
</evidence>
<evidence type="ECO:0000305" key="6"/>
<name>MAD3_MOUSE</name>
<gene>
    <name type="primary">Mxd3</name>
    <name type="synonym">Mad3</name>
</gene>
<sequence length="206" mass="23635">MEPVASNIQVLLQAAEFLERREREAEHGYASLCPHHSPGTVCRRRKPPLQAPGALNSGRSVHNELEKRRRAQLKRCLEQLRQQMPLGVDCTRYTTLSLLRRARVHIQKLEEQEQQARRLKEKLRSKQQSLQQQLEQLQGLPGARERERLRADSLDSSGLSSERSDSDQEDLEVDVESLVFGTETELLQSFSAGREHSYSHSTCAWL</sequence>
<keyword id="KW-0238">DNA-binding</keyword>
<keyword id="KW-0539">Nucleus</keyword>
<keyword id="KW-1185">Reference proteome</keyword>
<keyword id="KW-0678">Repressor</keyword>
<keyword id="KW-0804">Transcription</keyword>
<keyword id="KW-0805">Transcription regulation</keyword>
<proteinExistence type="evidence at protein level"/>
<reference key="1">
    <citation type="journal article" date="1995" name="EMBO J.">
        <title>Mad3 and Mad4: novel Max-interacting transcriptional repressors that suppress c-myc dependent transformation and are expressed during neural and epidermal differentiation.</title>
        <authorList>
            <person name="Hurlin P.J."/>
            <person name="Queva C."/>
            <person name="Koskinen P.J."/>
            <person name="Steingrimsson E."/>
            <person name="Ayer D.E."/>
            <person name="Copeland N.G."/>
            <person name="Jenkins N.A."/>
            <person name="Eisenman R.N."/>
        </authorList>
    </citation>
    <scope>NUCLEOTIDE SEQUENCE [MRNA]</scope>
    <scope>FUNCTION</scope>
    <scope>DEVELOPMENTAL STAGE</scope>
    <scope>SUBUNIT</scope>
    <scope>SUBCELLULAR LOCATION</scope>
    <scope>INTERACTION WITH SIN3A AND SIN3B</scope>
    <source>
        <strain>AB1</strain>
        <tissue>Embryonic stem cell</tissue>
    </source>
</reference>
<reference key="2">
    <citation type="journal article" date="1996" name="EMBO J.">
        <authorList>
            <person name="Hurlin P.J."/>
            <person name="Queva C."/>
            <person name="Koskinen P.J."/>
            <person name="Steingrimsson E."/>
            <person name="Ayer D.E."/>
            <person name="Copeland N.G."/>
            <person name="Jenkins N.A."/>
            <person name="Eisenman R.N."/>
        </authorList>
    </citation>
    <scope>ERRATUM OF PUBMED:8521822</scope>
</reference>
<reference key="3">
    <citation type="journal article" date="2005" name="Science">
        <title>The transcriptional landscape of the mammalian genome.</title>
        <authorList>
            <person name="Carninci P."/>
            <person name="Kasukawa T."/>
            <person name="Katayama S."/>
            <person name="Gough J."/>
            <person name="Frith M.C."/>
            <person name="Maeda N."/>
            <person name="Oyama R."/>
            <person name="Ravasi T."/>
            <person name="Lenhard B."/>
            <person name="Wells C."/>
            <person name="Kodzius R."/>
            <person name="Shimokawa K."/>
            <person name="Bajic V.B."/>
            <person name="Brenner S.E."/>
            <person name="Batalov S."/>
            <person name="Forrest A.R."/>
            <person name="Zavolan M."/>
            <person name="Davis M.J."/>
            <person name="Wilming L.G."/>
            <person name="Aidinis V."/>
            <person name="Allen J.E."/>
            <person name="Ambesi-Impiombato A."/>
            <person name="Apweiler R."/>
            <person name="Aturaliya R.N."/>
            <person name="Bailey T.L."/>
            <person name="Bansal M."/>
            <person name="Baxter L."/>
            <person name="Beisel K.W."/>
            <person name="Bersano T."/>
            <person name="Bono H."/>
            <person name="Chalk A.M."/>
            <person name="Chiu K.P."/>
            <person name="Choudhary V."/>
            <person name="Christoffels A."/>
            <person name="Clutterbuck D.R."/>
            <person name="Crowe M.L."/>
            <person name="Dalla E."/>
            <person name="Dalrymple B.P."/>
            <person name="de Bono B."/>
            <person name="Della Gatta G."/>
            <person name="di Bernardo D."/>
            <person name="Down T."/>
            <person name="Engstrom P."/>
            <person name="Fagiolini M."/>
            <person name="Faulkner G."/>
            <person name="Fletcher C.F."/>
            <person name="Fukushima T."/>
            <person name="Furuno M."/>
            <person name="Futaki S."/>
            <person name="Gariboldi M."/>
            <person name="Georgii-Hemming P."/>
            <person name="Gingeras T.R."/>
            <person name="Gojobori T."/>
            <person name="Green R.E."/>
            <person name="Gustincich S."/>
            <person name="Harbers M."/>
            <person name="Hayashi Y."/>
            <person name="Hensch T.K."/>
            <person name="Hirokawa N."/>
            <person name="Hill D."/>
            <person name="Huminiecki L."/>
            <person name="Iacono M."/>
            <person name="Ikeo K."/>
            <person name="Iwama A."/>
            <person name="Ishikawa T."/>
            <person name="Jakt M."/>
            <person name="Kanapin A."/>
            <person name="Katoh M."/>
            <person name="Kawasawa Y."/>
            <person name="Kelso J."/>
            <person name="Kitamura H."/>
            <person name="Kitano H."/>
            <person name="Kollias G."/>
            <person name="Krishnan S.P."/>
            <person name="Kruger A."/>
            <person name="Kummerfeld S.K."/>
            <person name="Kurochkin I.V."/>
            <person name="Lareau L.F."/>
            <person name="Lazarevic D."/>
            <person name="Lipovich L."/>
            <person name="Liu J."/>
            <person name="Liuni S."/>
            <person name="McWilliam S."/>
            <person name="Madan Babu M."/>
            <person name="Madera M."/>
            <person name="Marchionni L."/>
            <person name="Matsuda H."/>
            <person name="Matsuzawa S."/>
            <person name="Miki H."/>
            <person name="Mignone F."/>
            <person name="Miyake S."/>
            <person name="Morris K."/>
            <person name="Mottagui-Tabar S."/>
            <person name="Mulder N."/>
            <person name="Nakano N."/>
            <person name="Nakauchi H."/>
            <person name="Ng P."/>
            <person name="Nilsson R."/>
            <person name="Nishiguchi S."/>
            <person name="Nishikawa S."/>
            <person name="Nori F."/>
            <person name="Ohara O."/>
            <person name="Okazaki Y."/>
            <person name="Orlando V."/>
            <person name="Pang K.C."/>
            <person name="Pavan W.J."/>
            <person name="Pavesi G."/>
            <person name="Pesole G."/>
            <person name="Petrovsky N."/>
            <person name="Piazza S."/>
            <person name="Reed J."/>
            <person name="Reid J.F."/>
            <person name="Ring B.Z."/>
            <person name="Ringwald M."/>
            <person name="Rost B."/>
            <person name="Ruan Y."/>
            <person name="Salzberg S.L."/>
            <person name="Sandelin A."/>
            <person name="Schneider C."/>
            <person name="Schoenbach C."/>
            <person name="Sekiguchi K."/>
            <person name="Semple C.A."/>
            <person name="Seno S."/>
            <person name="Sessa L."/>
            <person name="Sheng Y."/>
            <person name="Shibata Y."/>
            <person name="Shimada H."/>
            <person name="Shimada K."/>
            <person name="Silva D."/>
            <person name="Sinclair B."/>
            <person name="Sperling S."/>
            <person name="Stupka E."/>
            <person name="Sugiura K."/>
            <person name="Sultana R."/>
            <person name="Takenaka Y."/>
            <person name="Taki K."/>
            <person name="Tammoja K."/>
            <person name="Tan S.L."/>
            <person name="Tang S."/>
            <person name="Taylor M.S."/>
            <person name="Tegner J."/>
            <person name="Teichmann S.A."/>
            <person name="Ueda H.R."/>
            <person name="van Nimwegen E."/>
            <person name="Verardo R."/>
            <person name="Wei C.L."/>
            <person name="Yagi K."/>
            <person name="Yamanishi H."/>
            <person name="Zabarovsky E."/>
            <person name="Zhu S."/>
            <person name="Zimmer A."/>
            <person name="Hide W."/>
            <person name="Bult C."/>
            <person name="Grimmond S.M."/>
            <person name="Teasdale R.D."/>
            <person name="Liu E.T."/>
            <person name="Brusic V."/>
            <person name="Quackenbush J."/>
            <person name="Wahlestedt C."/>
            <person name="Mattick J.S."/>
            <person name="Hume D.A."/>
            <person name="Kai C."/>
            <person name="Sasaki D."/>
            <person name="Tomaru Y."/>
            <person name="Fukuda S."/>
            <person name="Kanamori-Katayama M."/>
            <person name="Suzuki M."/>
            <person name="Aoki J."/>
            <person name="Arakawa T."/>
            <person name="Iida J."/>
            <person name="Imamura K."/>
            <person name="Itoh M."/>
            <person name="Kato T."/>
            <person name="Kawaji H."/>
            <person name="Kawagashira N."/>
            <person name="Kawashima T."/>
            <person name="Kojima M."/>
            <person name="Kondo S."/>
            <person name="Konno H."/>
            <person name="Nakano K."/>
            <person name="Ninomiya N."/>
            <person name="Nishio T."/>
            <person name="Okada M."/>
            <person name="Plessy C."/>
            <person name="Shibata K."/>
            <person name="Shiraki T."/>
            <person name="Suzuki S."/>
            <person name="Tagami M."/>
            <person name="Waki K."/>
            <person name="Watahiki A."/>
            <person name="Okamura-Oho Y."/>
            <person name="Suzuki H."/>
            <person name="Kawai J."/>
            <person name="Hayashizaki Y."/>
        </authorList>
    </citation>
    <scope>NUCLEOTIDE SEQUENCE [LARGE SCALE MRNA]</scope>
    <source>
        <strain>C57BL/6J</strain>
        <tissue>Thymus</tissue>
    </source>
</reference>
<reference key="4">
    <citation type="journal article" date="2004" name="Genome Res.">
        <title>The status, quality, and expansion of the NIH full-length cDNA project: the Mammalian Gene Collection (MGC).</title>
        <authorList>
            <consortium name="The MGC Project Team"/>
        </authorList>
    </citation>
    <scope>NUCLEOTIDE SEQUENCE [LARGE SCALE MRNA]</scope>
    <source>
        <strain>C57BL/6J</strain>
    </source>
</reference>
<reference key="5">
    <citation type="journal article" date="2001" name="Mol. Cell. Biol.">
        <title>Targeted deletion of the S-phase-specific Myc antagonist Mad3 sensitizes neuronal and lymphoid cells to radiation-induced apoptosis.</title>
        <authorList>
            <person name="Queva C."/>
            <person name="McArthur G.A."/>
            <person name="Iritani B.M."/>
            <person name="Eisenman R.N."/>
        </authorList>
    </citation>
    <scope>TISSUE SPECIFICITY</scope>
    <scope>DEVELOPMENTAL STAGE</scope>
</reference>
<reference key="6">
    <citation type="journal article" date="1999" name="Oncogene">
        <title>Mmip-2, a novel RING finger protein that interacts with mad members of the Myc oncoprotein network.</title>
        <authorList>
            <person name="Yin X.-Y."/>
            <person name="Gupta K."/>
            <person name="Prochownik E.V."/>
        </authorList>
    </citation>
    <scope>INTERACTION WITH RNF17</scope>
</reference>
<dbReference type="EMBL" id="U32394">
    <property type="protein sequence ID" value="AAB02794.1"/>
    <property type="molecule type" value="mRNA"/>
</dbReference>
<dbReference type="EMBL" id="AK138742">
    <property type="protein sequence ID" value="BAE23764.1"/>
    <property type="molecule type" value="mRNA"/>
</dbReference>
<dbReference type="EMBL" id="BC051970">
    <property type="protein sequence ID" value="AAH51970.1"/>
    <property type="molecule type" value="mRNA"/>
</dbReference>
<dbReference type="CCDS" id="CCDS26543.1"/>
<dbReference type="PIR" id="S60005">
    <property type="entry name" value="S60005"/>
</dbReference>
<dbReference type="RefSeq" id="NP_057871.2">
    <property type="nucleotide sequence ID" value="NM_016662.4"/>
</dbReference>
<dbReference type="SMR" id="Q80US8"/>
<dbReference type="BioGRID" id="201271">
    <property type="interactions" value="1"/>
</dbReference>
<dbReference type="DIP" id="DIP-948N"/>
<dbReference type="FunCoup" id="Q80US8">
    <property type="interactions" value="309"/>
</dbReference>
<dbReference type="IntAct" id="Q80US8">
    <property type="interactions" value="1"/>
</dbReference>
<dbReference type="STRING" id="10090.ENSMUSP00000021941"/>
<dbReference type="PhosphoSitePlus" id="Q80US8"/>
<dbReference type="PaxDb" id="10090-ENSMUSP00000021941"/>
<dbReference type="ProteomicsDB" id="291999"/>
<dbReference type="ABCD" id="Q80US8">
    <property type="antibodies" value="1 sequenced antibody"/>
</dbReference>
<dbReference type="Antibodypedia" id="17372">
    <property type="antibodies" value="212 antibodies from 28 providers"/>
</dbReference>
<dbReference type="DNASU" id="17121"/>
<dbReference type="Ensembl" id="ENSMUST00000021941.8">
    <property type="protein sequence ID" value="ENSMUSP00000021941.8"/>
    <property type="gene ID" value="ENSMUSG00000021485.15"/>
</dbReference>
<dbReference type="GeneID" id="17121"/>
<dbReference type="KEGG" id="mmu:17121"/>
<dbReference type="UCSC" id="uc007qqn.1">
    <property type="organism name" value="mouse"/>
</dbReference>
<dbReference type="AGR" id="MGI:104987"/>
<dbReference type="CTD" id="83463"/>
<dbReference type="MGI" id="MGI:104987">
    <property type="gene designation" value="Mxd3"/>
</dbReference>
<dbReference type="VEuPathDB" id="HostDB:ENSMUSG00000021485"/>
<dbReference type="eggNOG" id="KOG2483">
    <property type="taxonomic scope" value="Eukaryota"/>
</dbReference>
<dbReference type="GeneTree" id="ENSGT00940000161050"/>
<dbReference type="HOGENOM" id="CLU_082604_1_0_1"/>
<dbReference type="InParanoid" id="Q80US8"/>
<dbReference type="OMA" id="HTDADHC"/>
<dbReference type="OrthoDB" id="5920083at2759"/>
<dbReference type="PhylomeDB" id="Q80US8"/>
<dbReference type="TreeFam" id="TF315654"/>
<dbReference type="BioGRID-ORCS" id="17121">
    <property type="hits" value="3 hits in 81 CRISPR screens"/>
</dbReference>
<dbReference type="PRO" id="PR:Q80US8"/>
<dbReference type="Proteomes" id="UP000000589">
    <property type="component" value="Chromosome 13"/>
</dbReference>
<dbReference type="RNAct" id="Q80US8">
    <property type="molecule type" value="protein"/>
</dbReference>
<dbReference type="Bgee" id="ENSMUSG00000021485">
    <property type="expression patterns" value="Expressed in lumbar dorsal root ganglion and 205 other cell types or tissues"/>
</dbReference>
<dbReference type="GO" id="GO:0090575">
    <property type="term" value="C:RNA polymerase II transcription regulator complex"/>
    <property type="evidence" value="ECO:0000315"/>
    <property type="project" value="NTNU_SB"/>
</dbReference>
<dbReference type="GO" id="GO:0003677">
    <property type="term" value="F:DNA binding"/>
    <property type="evidence" value="ECO:0007669"/>
    <property type="project" value="UniProtKB-KW"/>
</dbReference>
<dbReference type="GO" id="GO:0046983">
    <property type="term" value="F:protein dimerization activity"/>
    <property type="evidence" value="ECO:0007669"/>
    <property type="project" value="InterPro"/>
</dbReference>
<dbReference type="GO" id="GO:0045892">
    <property type="term" value="P:negative regulation of DNA-templated transcription"/>
    <property type="evidence" value="ECO:0000316"/>
    <property type="project" value="MGI"/>
</dbReference>
<dbReference type="GO" id="GO:0000122">
    <property type="term" value="P:negative regulation of transcription by RNA polymerase II"/>
    <property type="evidence" value="ECO:0000314"/>
    <property type="project" value="NTNU_SB"/>
</dbReference>
<dbReference type="FunFam" id="4.10.280.10:FF:000073">
    <property type="entry name" value="MAX dimerization protein 3"/>
    <property type="match status" value="1"/>
</dbReference>
<dbReference type="Gene3D" id="4.10.280.10">
    <property type="entry name" value="Helix-loop-helix DNA-binding domain"/>
    <property type="match status" value="1"/>
</dbReference>
<dbReference type="InterPro" id="IPR011598">
    <property type="entry name" value="bHLH_dom"/>
</dbReference>
<dbReference type="InterPro" id="IPR036638">
    <property type="entry name" value="HLH_DNA-bd_sf"/>
</dbReference>
<dbReference type="PANTHER" id="PTHR11969:SF6">
    <property type="entry name" value="MAX DIMERIZATION PROTEIN 3"/>
    <property type="match status" value="1"/>
</dbReference>
<dbReference type="PANTHER" id="PTHR11969">
    <property type="entry name" value="MAX DIMERIZATION, MAD"/>
    <property type="match status" value="1"/>
</dbReference>
<dbReference type="Pfam" id="PF00010">
    <property type="entry name" value="HLH"/>
    <property type="match status" value="1"/>
</dbReference>
<dbReference type="SMART" id="SM00353">
    <property type="entry name" value="HLH"/>
    <property type="match status" value="1"/>
</dbReference>
<dbReference type="SUPFAM" id="SSF47459">
    <property type="entry name" value="HLH, helix-loop-helix DNA-binding domain"/>
    <property type="match status" value="1"/>
</dbReference>
<dbReference type="PROSITE" id="PS50888">
    <property type="entry name" value="BHLH"/>
    <property type="match status" value="1"/>
</dbReference>
<comment type="function">
    <text evidence="5">Transcriptional repressor. Binds with MAX to form a sequence-specific DNA-binding protein complex which recognizes the core sequence 5'-CAC[GA]TG-3'. Antagonizes MYC transcriptional activity by competing for MAX and suppresses MYC dependent cell transformation.</text>
</comment>
<comment type="subunit">
    <text evidence="3 5">Efficient DNA binding requires dimerization with another bHLH protein. Binds DNA as a heterodimer with MAX. Interacts with SIN3A AND SIN3B. Interacts with RNF17.</text>
</comment>
<comment type="subcellular location">
    <subcellularLocation>
        <location evidence="1 5">Nucleus</location>
    </subcellularLocation>
</comment>
<comment type="tissue specificity">
    <text evidence="4">Expressed only in the proliferating areas of the testis and thymus.</text>
</comment>
<comment type="developmental stage">
    <text evidence="4 5">Expressed during neural and epidermal differentiation. Expression restricted to proliferating cells prior to differentiation. Specifically expressed in the S phase of the cell cycle in neuronal progenitor cells. In the developing embryo, detected from 9.5 to 12.5 dpc especially in the ventricular zone of the neuroepithelia, in the progression zone of the limb buds and in the aortic arches and liver. In the spinal cord at embryonic days 10.5, 11.5 and 12.5 dpc, expressed in the cells at the perimeter of the ventricular zone. In the developing epidermis, expressed only in the uppermost differentiated cell layers underneath the stratum corneum.</text>
</comment>
<comment type="miscellaneous">
    <text>Mice deficient for Mxd3 show increased sensitivity of neuronal and lymphoid cells to gamma-radiation induced apoptosis.</text>
</comment>
<feature type="chain" id="PRO_0000253708" description="Max dimerization protein 3">
    <location>
        <begin position="1"/>
        <end position="206"/>
    </location>
</feature>
<feature type="domain" description="bHLH" evidence="1">
    <location>
        <begin position="57"/>
        <end position="109"/>
    </location>
</feature>
<feature type="region of interest" description="Interaction with SIN3A and SIN3B" evidence="5">
    <location>
        <begin position="8"/>
        <end position="25"/>
    </location>
</feature>
<feature type="region of interest" description="Disordered" evidence="2">
    <location>
        <begin position="29"/>
        <end position="66"/>
    </location>
</feature>
<feature type="region of interest" description="Disordered" evidence="2">
    <location>
        <begin position="122"/>
        <end position="171"/>
    </location>
</feature>
<feature type="compositionally biased region" description="Low complexity" evidence="2">
    <location>
        <begin position="126"/>
        <end position="138"/>
    </location>
</feature>
<feature type="compositionally biased region" description="Basic and acidic residues" evidence="2">
    <location>
        <begin position="143"/>
        <end position="153"/>
    </location>
</feature>
<feature type="sequence conflict" description="In Ref. 1; AAB02794." evidence="6" ref="1">
    <original>S</original>
    <variation>N</variation>
    <location>
        <position position="177"/>
    </location>
</feature>